<protein>
    <recommendedName>
        <fullName>Kunitz-type trypsin inhibitor-like 1 protein</fullName>
    </recommendedName>
    <alternativeName>
        <fullName>Protease inhibitor from pea 1</fullName>
    </alternativeName>
</protein>
<keyword id="KW-0903">Direct protein sequencing</keyword>
<keyword id="KW-1015">Disulfide bond</keyword>
<keyword id="KW-0325">Glycoprotein</keyword>
<keyword id="KW-0646">Protease inhibitor</keyword>
<keyword id="KW-0964">Secreted</keyword>
<keyword id="KW-0722">Serine protease inhibitor</keyword>
<keyword id="KW-0732">Signal</keyword>
<reference key="1">
    <citation type="journal article" date="1995" name="J. Biol. Chem.">
        <title>Molecular cloning and pattern of expression of an alpha-L-fucosidase gene from pea seedlings.</title>
        <authorList>
            <person name="Augur C."/>
            <person name="Stiefel V."/>
            <person name="Darvill A."/>
            <person name="Albersheim P."/>
            <person name="Puigdomenech P."/>
        </authorList>
    </citation>
    <scope>NUCLEOTIDE SEQUENCE [GENOMIC DNA]</scope>
    <scope>PROTEIN SEQUENCE OF 27-50; 54-77; 121-130 AND 139-147</scope>
    <scope>TISSUE SPECIFICITY</scope>
    <scope>FUNCTION</scope>
</reference>
<reference key="2">
    <citation type="journal article" date="2003" name="Plant Mol. Biol.">
        <title>The fuc1 gene product (20 kDa FUC1) of Pisum sativum has no alpha-L-fucosidase activity.</title>
        <authorList>
            <person name="Tarrago T."/>
            <person name="Martinez I."/>
            <person name="Torrent M."/>
            <person name="Codina A."/>
            <person name="Giralt E."/>
            <person name="Puigdomenech P."/>
            <person name="Ludevid D."/>
        </authorList>
    </citation>
    <scope>FUNCTION REVISION</scope>
</reference>
<sequence>MKPLSPLTLSFFLFVFITNLSLAFSNEDVEQVLDFNGNPIFPGVQYFILPAIRGPAGGGVRLGRTGDLTCPVTVLQDRQEVKNGLPVKFVIPEISPGIIFTGTPIEIEYTKKPNCAKSSKWLVFVDNVIQKACVGIGGPENYPGVQTLSGLFKIEKHESGFGYKLGFCVKGSPTCLDVGRFDNDEDGRRLNLTEHESFQVVFIQAEANDAEFIKSVV</sequence>
<comment type="function">
    <text evidence="3 4">Might act as a protease inhibitor involved in plant defense responses.</text>
</comment>
<comment type="subcellular location">
    <subcellularLocation>
        <location evidence="5">Secreted</location>
    </subcellularLocation>
</comment>
<comment type="tissue specificity">
    <text evidence="4">Expressed in roots, leaves, epidermal layers of elongating stems, meristems and in the vascular system.</text>
</comment>
<comment type="similarity">
    <text evidence="5">Belongs to the protease inhibitor I3 (leguminous Kunitz-type inhibitor) family.</text>
</comment>
<comment type="caution">
    <text evidence="6">Was originally thought to be an alpha-L-fucosidase.</text>
</comment>
<comment type="caution">
    <text evidence="5">The nucleotide sequence (X82595) deposited at the EMBL differs from that shown in PubMed:7559605 with the same accession number.</text>
</comment>
<evidence type="ECO:0000250" key="1"/>
<evidence type="ECO:0000255" key="2"/>
<evidence type="ECO:0000269" key="3">
    <source>
    </source>
</evidence>
<evidence type="ECO:0000269" key="4">
    <source>
    </source>
</evidence>
<evidence type="ECO:0000305" key="5"/>
<evidence type="ECO:0000305" key="6">
    <source>
    </source>
</evidence>
<proteinExistence type="evidence at protein level"/>
<feature type="signal peptide" evidence="4">
    <location>
        <begin position="1"/>
        <end position="26"/>
    </location>
</feature>
<feature type="chain" id="PRO_0000290210" description="Kunitz-type trypsin inhibitor-like 1 protein">
    <location>
        <begin position="27"/>
        <end position="217"/>
    </location>
</feature>
<feature type="glycosylation site" description="N-linked (GlcNAc...) asparagine" evidence="2">
    <location>
        <position position="191"/>
    </location>
</feature>
<feature type="disulfide bond" evidence="1">
    <location>
        <begin position="70"/>
        <end position="115"/>
    </location>
</feature>
<feature type="disulfide bond" evidence="1">
    <location>
        <begin position="168"/>
        <end position="175"/>
    </location>
</feature>
<feature type="sequence conflict" description="In Ref. 1; AA sequence." evidence="5" ref="1">
    <original>F</original>
    <variation>I</variation>
    <location>
        <position position="35"/>
    </location>
</feature>
<feature type="sequence conflict" description="In Ref. 1; AA sequence." evidence="5" ref="1">
    <original>V</original>
    <variation>G</variation>
    <location>
        <position position="44"/>
    </location>
</feature>
<feature type="sequence conflict" description="In Ref. 1; AA sequence." evidence="5" ref="1">
    <original>F</original>
    <variation>Y</variation>
    <location>
        <position position="47"/>
    </location>
</feature>
<feature type="sequence conflict" description="In Ref. 1; AA sequence." evidence="5" ref="1">
    <original>A</original>
    <variation>P</variation>
    <location>
        <position position="56"/>
    </location>
</feature>
<feature type="sequence conflict" description="In Ref. 1; AA sequence." evidence="5" ref="1">
    <original>VIQ</original>
    <variation>LIE</variation>
    <location>
        <begin position="128"/>
        <end position="130"/>
    </location>
</feature>
<organism>
    <name type="scientific">Pisum sativum</name>
    <name type="common">Garden pea</name>
    <name type="synonym">Lathyrus oleraceus</name>
    <dbReference type="NCBI Taxonomy" id="3888"/>
    <lineage>
        <taxon>Eukaryota</taxon>
        <taxon>Viridiplantae</taxon>
        <taxon>Streptophyta</taxon>
        <taxon>Embryophyta</taxon>
        <taxon>Tracheophyta</taxon>
        <taxon>Spermatophyta</taxon>
        <taxon>Magnoliopsida</taxon>
        <taxon>eudicotyledons</taxon>
        <taxon>Gunneridae</taxon>
        <taxon>Pentapetalae</taxon>
        <taxon>rosids</taxon>
        <taxon>fabids</taxon>
        <taxon>Fabales</taxon>
        <taxon>Fabaceae</taxon>
        <taxon>Papilionoideae</taxon>
        <taxon>50 kb inversion clade</taxon>
        <taxon>NPAAA clade</taxon>
        <taxon>Hologalegina</taxon>
        <taxon>IRL clade</taxon>
        <taxon>Fabeae</taxon>
        <taxon>Pisum</taxon>
    </lineage>
</organism>
<dbReference type="EMBL" id="X82595">
    <property type="protein sequence ID" value="CAA57931.1"/>
    <property type="molecule type" value="Genomic_DNA"/>
</dbReference>
<dbReference type="PIR" id="S49578">
    <property type="entry name" value="S49578"/>
</dbReference>
<dbReference type="PIR" id="S65830">
    <property type="entry name" value="S65830"/>
</dbReference>
<dbReference type="BMRB" id="Q41015"/>
<dbReference type="SMR" id="Q41015"/>
<dbReference type="MEROPS" id="I03.025"/>
<dbReference type="GlyCosmos" id="Q41015">
    <property type="glycosylation" value="1 site, No reported glycans"/>
</dbReference>
<dbReference type="GO" id="GO:0005576">
    <property type="term" value="C:extracellular region"/>
    <property type="evidence" value="ECO:0007669"/>
    <property type="project" value="UniProtKB-SubCell"/>
</dbReference>
<dbReference type="GO" id="GO:0004867">
    <property type="term" value="F:serine-type endopeptidase inhibitor activity"/>
    <property type="evidence" value="ECO:0007669"/>
    <property type="project" value="UniProtKB-KW"/>
</dbReference>
<dbReference type="CDD" id="cd23377">
    <property type="entry name" value="beta-trefoil_STI_MP4-like"/>
    <property type="match status" value="1"/>
</dbReference>
<dbReference type="Gene3D" id="2.80.10.50">
    <property type="match status" value="1"/>
</dbReference>
<dbReference type="InterPro" id="IPR011065">
    <property type="entry name" value="Kunitz_inhibitor_STI-like_sf"/>
</dbReference>
<dbReference type="InterPro" id="IPR002160">
    <property type="entry name" value="Prot_inh_Kunz-lg"/>
</dbReference>
<dbReference type="PANTHER" id="PTHR33107:SF21">
    <property type="entry name" value="KUNITZ FAMILY TRYPSIN AND PROTEASE INHIBITOR PROTEIN"/>
    <property type="match status" value="1"/>
</dbReference>
<dbReference type="PANTHER" id="PTHR33107">
    <property type="entry name" value="KUNITZ TRYPSIN INHIBITOR 2"/>
    <property type="match status" value="1"/>
</dbReference>
<dbReference type="Pfam" id="PF00197">
    <property type="entry name" value="Kunitz_legume"/>
    <property type="match status" value="1"/>
</dbReference>
<dbReference type="PRINTS" id="PR00291">
    <property type="entry name" value="KUNITZINHBTR"/>
</dbReference>
<dbReference type="SMART" id="SM00452">
    <property type="entry name" value="STI"/>
    <property type="match status" value="1"/>
</dbReference>
<dbReference type="SUPFAM" id="SSF50386">
    <property type="entry name" value="STI-like"/>
    <property type="match status" value="1"/>
</dbReference>
<dbReference type="PROSITE" id="PS00283">
    <property type="entry name" value="SOYBEAN_KUNITZ"/>
    <property type="match status" value="1"/>
</dbReference>
<name>PIP21_PEA</name>
<gene>
    <name type="primary">PIP20-1</name>
    <name type="synonym">FUC1</name>
</gene>
<accession>Q41015</accession>